<evidence type="ECO:0000250" key="1"/>
<evidence type="ECO:0000255" key="2"/>
<evidence type="ECO:0000305" key="3"/>
<organism>
    <name type="scientific">Pongo pygmaeus</name>
    <name type="common">Bornean orangutan</name>
    <dbReference type="NCBI Taxonomy" id="9600"/>
    <lineage>
        <taxon>Eukaryota</taxon>
        <taxon>Metazoa</taxon>
        <taxon>Chordata</taxon>
        <taxon>Craniata</taxon>
        <taxon>Vertebrata</taxon>
        <taxon>Euteleostomi</taxon>
        <taxon>Mammalia</taxon>
        <taxon>Eutheria</taxon>
        <taxon>Euarchontoglires</taxon>
        <taxon>Primates</taxon>
        <taxon>Haplorrhini</taxon>
        <taxon>Catarrhini</taxon>
        <taxon>Hominidae</taxon>
        <taxon>Pongo</taxon>
    </lineage>
</organism>
<reference key="1">
    <citation type="submission" date="2006-02" db="EMBL/GenBank/DDBJ databases">
        <title>Sweet receptor gene variation and aspartame blindness in both primates and non-primates.</title>
        <authorList>
            <person name="Li X."/>
            <person name="Wong E.W."/>
            <person name="Li W."/>
            <person name="Lim R."/>
            <person name="Mascioli K.J."/>
            <person name="Maehashi K."/>
            <person name="Bachmanov A.A."/>
            <person name="Tordoff M.G."/>
            <person name="Beauchamp G.K."/>
            <person name="Reed D.R."/>
        </authorList>
    </citation>
    <scope>NUCLEOTIDE SEQUENCE [GENOMIC DNA]</scope>
</reference>
<name>TS1R2_PONPY</name>
<feature type="signal peptide" evidence="2">
    <location>
        <begin position="1"/>
        <end position="19"/>
    </location>
</feature>
<feature type="chain" id="PRO_0000285555" description="Taste receptor type 1 member 2">
    <location>
        <begin position="20"/>
        <end position="839"/>
    </location>
</feature>
<feature type="topological domain" description="Extracellular" evidence="2">
    <location>
        <begin position="20"/>
        <end position="566"/>
    </location>
</feature>
<feature type="transmembrane region" description="Helical; Name=1" evidence="2">
    <location>
        <begin position="567"/>
        <end position="587"/>
    </location>
</feature>
<feature type="topological domain" description="Cytoplasmic" evidence="2">
    <location>
        <begin position="588"/>
        <end position="602"/>
    </location>
</feature>
<feature type="transmembrane region" description="Helical; Name=2" evidence="2">
    <location>
        <begin position="603"/>
        <end position="623"/>
    </location>
</feature>
<feature type="topological domain" description="Extracellular" evidence="2">
    <location>
        <begin position="624"/>
        <end position="635"/>
    </location>
</feature>
<feature type="transmembrane region" description="Helical; Name=3" evidence="2">
    <location>
        <begin position="636"/>
        <end position="656"/>
    </location>
</feature>
<feature type="topological domain" description="Cytoplasmic" evidence="2">
    <location>
        <begin position="657"/>
        <end position="681"/>
    </location>
</feature>
<feature type="transmembrane region" description="Helical; Name=4" evidence="2">
    <location>
        <begin position="682"/>
        <end position="702"/>
    </location>
</feature>
<feature type="topological domain" description="Extracellular" evidence="2">
    <location>
        <begin position="703"/>
        <end position="727"/>
    </location>
</feature>
<feature type="transmembrane region" description="Helical; Name=5" evidence="2">
    <location>
        <begin position="728"/>
        <end position="748"/>
    </location>
</feature>
<feature type="topological domain" description="Cytoplasmic" evidence="2">
    <location>
        <begin position="749"/>
        <end position="760"/>
    </location>
</feature>
<feature type="transmembrane region" description="Helical; Name=6" evidence="2">
    <location>
        <begin position="761"/>
        <end position="781"/>
    </location>
</feature>
<feature type="topological domain" description="Extracellular" evidence="2">
    <location>
        <begin position="782"/>
        <end position="784"/>
    </location>
</feature>
<feature type="transmembrane region" description="Helical; Name=7" evidence="2">
    <location>
        <begin position="785"/>
        <end position="805"/>
    </location>
</feature>
<feature type="topological domain" description="Cytoplasmic" evidence="2">
    <location>
        <begin position="806"/>
        <end position="839"/>
    </location>
</feature>
<feature type="glycosylation site" description="N-linked (GlcNAc...) asparagine" evidence="2">
    <location>
        <position position="84"/>
    </location>
</feature>
<feature type="glycosylation site" description="N-linked (GlcNAc...) asparagine" evidence="2">
    <location>
        <position position="248"/>
    </location>
</feature>
<feature type="glycosylation site" description="N-linked (GlcNAc...) asparagine" evidence="2">
    <location>
        <position position="292"/>
    </location>
</feature>
<feature type="glycosylation site" description="N-linked (GlcNAc...) asparagine" evidence="2">
    <location>
        <position position="312"/>
    </location>
</feature>
<feature type="glycosylation site" description="N-linked (GlcNAc...) asparagine" evidence="2">
    <location>
        <position position="368"/>
    </location>
</feature>
<feature type="glycosylation site" description="N-linked (GlcNAc...) asparagine" evidence="2">
    <location>
        <position position="428"/>
    </location>
</feature>
<feature type="glycosylation site" description="N-linked (GlcNAc...) asparagine" evidence="2">
    <location>
        <position position="487"/>
    </location>
</feature>
<feature type="glycosylation site" description="N-linked (GlcNAc...) asparagine" evidence="2">
    <location>
        <position position="527"/>
    </location>
</feature>
<accession>A3QP00</accession>
<keyword id="KW-1003">Cell membrane</keyword>
<keyword id="KW-0297">G-protein coupled receptor</keyword>
<keyword id="KW-0325">Glycoprotein</keyword>
<keyword id="KW-0472">Membrane</keyword>
<keyword id="KW-0675">Receptor</keyword>
<keyword id="KW-0716">Sensory transduction</keyword>
<keyword id="KW-0732">Signal</keyword>
<keyword id="KW-0919">Taste</keyword>
<keyword id="KW-0807">Transducer</keyword>
<keyword id="KW-0812">Transmembrane</keyword>
<keyword id="KW-1133">Transmembrane helix</keyword>
<dbReference type="EMBL" id="DQ386297">
    <property type="protein sequence ID" value="ABD37677.1"/>
    <property type="molecule type" value="Genomic_DNA"/>
</dbReference>
<dbReference type="SMR" id="A3QP00"/>
<dbReference type="GlyCosmos" id="A3QP00">
    <property type="glycosylation" value="8 sites, No reported glycans"/>
</dbReference>
<dbReference type="GO" id="GO:0005886">
    <property type="term" value="C:plasma membrane"/>
    <property type="evidence" value="ECO:0007669"/>
    <property type="project" value="UniProtKB-SubCell"/>
</dbReference>
<dbReference type="GO" id="GO:1903767">
    <property type="term" value="C:sweet taste receptor complex"/>
    <property type="evidence" value="ECO:0007669"/>
    <property type="project" value="TreeGrafter"/>
</dbReference>
<dbReference type="GO" id="GO:0004930">
    <property type="term" value="F:G protein-coupled receptor activity"/>
    <property type="evidence" value="ECO:0007669"/>
    <property type="project" value="UniProtKB-KW"/>
</dbReference>
<dbReference type="GO" id="GO:0033041">
    <property type="term" value="F:sweet taste receptor activity"/>
    <property type="evidence" value="ECO:0007669"/>
    <property type="project" value="TreeGrafter"/>
</dbReference>
<dbReference type="CDD" id="cd15288">
    <property type="entry name" value="7tmC_TAS1R2"/>
    <property type="match status" value="1"/>
</dbReference>
<dbReference type="CDD" id="cd06363">
    <property type="entry name" value="PBP1_taste_receptor"/>
    <property type="match status" value="1"/>
</dbReference>
<dbReference type="FunFam" id="3.40.50.2300:FF:000016">
    <property type="entry name" value="Taste 1 receptor member 2"/>
    <property type="match status" value="1"/>
</dbReference>
<dbReference type="FunFam" id="2.10.50.30:FF:000004">
    <property type="entry name" value="Taste receptor type 1 member 3-like protein"/>
    <property type="match status" value="1"/>
</dbReference>
<dbReference type="Gene3D" id="3.40.50.2300">
    <property type="match status" value="2"/>
</dbReference>
<dbReference type="Gene3D" id="2.10.50.30">
    <property type="entry name" value="GPCR, family 3, nine cysteines domain"/>
    <property type="match status" value="1"/>
</dbReference>
<dbReference type="InterPro" id="IPR001828">
    <property type="entry name" value="ANF_lig-bd_rcpt"/>
</dbReference>
<dbReference type="InterPro" id="IPR000337">
    <property type="entry name" value="GPCR_3"/>
</dbReference>
<dbReference type="InterPro" id="IPR011500">
    <property type="entry name" value="GPCR_3_9-Cys_dom"/>
</dbReference>
<dbReference type="InterPro" id="IPR038550">
    <property type="entry name" value="GPCR_3_9-Cys_sf"/>
</dbReference>
<dbReference type="InterPro" id="IPR017978">
    <property type="entry name" value="GPCR_3_C"/>
</dbReference>
<dbReference type="InterPro" id="IPR000068">
    <property type="entry name" value="GPCR_3_Ca_sens_rcpt-rel"/>
</dbReference>
<dbReference type="InterPro" id="IPR017979">
    <property type="entry name" value="GPCR_3_CS"/>
</dbReference>
<dbReference type="InterPro" id="IPR028082">
    <property type="entry name" value="Peripla_BP_I"/>
</dbReference>
<dbReference type="PANTHER" id="PTHR24061">
    <property type="entry name" value="CALCIUM-SENSING RECEPTOR-RELATED"/>
    <property type="match status" value="1"/>
</dbReference>
<dbReference type="PANTHER" id="PTHR24061:SF517">
    <property type="entry name" value="TASTE RECEPTOR TYPE 1 MEMBER 2"/>
    <property type="match status" value="1"/>
</dbReference>
<dbReference type="Pfam" id="PF00003">
    <property type="entry name" value="7tm_3"/>
    <property type="match status" value="1"/>
</dbReference>
<dbReference type="Pfam" id="PF01094">
    <property type="entry name" value="ANF_receptor"/>
    <property type="match status" value="1"/>
</dbReference>
<dbReference type="Pfam" id="PF07562">
    <property type="entry name" value="NCD3G"/>
    <property type="match status" value="1"/>
</dbReference>
<dbReference type="PRINTS" id="PR00248">
    <property type="entry name" value="GPCRMGR"/>
</dbReference>
<dbReference type="SUPFAM" id="SSF53822">
    <property type="entry name" value="Periplasmic binding protein-like I"/>
    <property type="match status" value="1"/>
</dbReference>
<dbReference type="PROSITE" id="PS00980">
    <property type="entry name" value="G_PROTEIN_RECEP_F3_2"/>
    <property type="match status" value="1"/>
</dbReference>
<dbReference type="PROSITE" id="PS50259">
    <property type="entry name" value="G_PROTEIN_RECEP_F3_4"/>
    <property type="match status" value="1"/>
</dbReference>
<proteinExistence type="inferred from homology"/>
<sequence length="839" mass="95051">MGPRATTICSLFFLLWVLAEPAENSDFYLPGDYLLGGLFSLHANMKGIVHLNFLQVPMCKEYEVKVIGYNLMQDMRFSVEEINNDSSLLPGVLLGYEMVDVCYVSNNVQPVLYFLAHEDNLLPIQEDYSDYVSRVVAVIGPDNSESVMTVANFLSLFLLPQITYSAISDELRDKVRFPALLRTTPSADHHIEAMVQLMLHFRWNWIIVLVSSDTYGRDNGQLLGERLARRDICIAFQETLPTLQPNQNMTSEERQRLVTIVDKLQQSTARVVVVFSPDLTLYDFFNEVLRQNFTGAVWIASESWAIDPVLHNLTELRHTGTFLGITIQSVPIPGFSEFRERDSQAGPPPLGKTSQRSTCNQECDNCLNATLSFNTILRLSGERVVYSVYSAVYAVAHALHSLLGCDHSTCTKRVVYPWQLLEEIWKVNFTLLDHQIFFDPQGDMALHLEIVQWQWDRSQNPFQSVASYHPLQRQLKNIQDISWHTINNTIPVSMCSKRCQSGQKKKPVGIHVCCFECIDCLPGTFLNHTEDEYECQACPSNEWSYQSETSCFKRQLAFLEWHEAPTIAVALLAALGFLSTLAILVIFWRHFQTPMVRSAGGPMCFLMLTLLLVAYMVVPVYVGPPKVSTCLCRQALFPLCFTICISCIAVRSFQIICAFKMASRFPRAYSYWVRYQGPYVSMAFITVLKMVIVVIGMLATGLNPTTRTDPDDPKIMIVSCNPNYRNSLLFNTSLDLLLSVVGFSFANMGKELPTNYNEAKFITLSMTFYFTSSISLCTFMSAYSGVLVTIVDLLVTVLNLLAISLGYFGPKCYMILFYPERNTPAYFNSVIQGYTMTRD</sequence>
<gene>
    <name type="primary">TAS1R2</name>
</gene>
<comment type="function">
    <text evidence="1">Putative taste receptor. TAS1R2/TAS1R3 recognizes diverse natural and synthetic sweeteners (By similarity).</text>
</comment>
<comment type="subunit">
    <text evidence="1">Forms heterodimers with TAS1R3.</text>
</comment>
<comment type="subcellular location">
    <subcellularLocation>
        <location evidence="1">Cell membrane</location>
        <topology evidence="1">Multi-pass membrane protein</topology>
    </subcellularLocation>
</comment>
<comment type="similarity">
    <text evidence="3">Belongs to the G-protein coupled receptor 3 family. TAS1R subfamily.</text>
</comment>
<protein>
    <recommendedName>
        <fullName>Taste receptor type 1 member 2</fullName>
    </recommendedName>
    <alternativeName>
        <fullName>Sweet taste receptor T1R2</fullName>
    </alternativeName>
</protein>